<protein>
    <recommendedName>
        <fullName evidence="1">Adenosylmethionine-8-amino-7-oxononanoate aminotransferase</fullName>
        <ecNumber evidence="1">2.6.1.62</ecNumber>
    </recommendedName>
    <alternativeName>
        <fullName evidence="1">7,8-diamino-pelargonic acid aminotransferase</fullName>
        <shortName evidence="1">DAPA AT</shortName>
        <shortName evidence="1">DAPA aminotransferase</shortName>
    </alternativeName>
    <alternativeName>
        <fullName evidence="1">7,8-diaminononanoate synthase</fullName>
        <shortName evidence="1">DANS</shortName>
    </alternativeName>
    <alternativeName>
        <fullName evidence="1">Diaminopelargonic acid synthase</fullName>
    </alternativeName>
</protein>
<sequence>MQKNNLNFDKQHIWHPYASMIQPTPCILVKSAKGIILKLHNGKKLIDGMSSWWSTIHGYNHPRLNNALKNQINKMSHVMFGGITHYPAISLCKKLIEITPNSLTRIFLSDSGSVSIEIAIKMILQYWQSLGKNKVIFLTIKKSYHGDTFAAMSVCDPKNSFHQFYHNFLPINIFADNPKCSFDGLWNKKDIISFKKLIQKHKDVVAAVILEPIVQSVGGMKFYHPNYLKQVRFLCDLYKIPLILDEIATGFGRTGKFFAFEHSNIVPDVLCIGKAITGGTITLSATLTTDKIANVISNSASGCLMHGPTFMGNPLACAAAYENILILQENKWKIQVKNIETCLRTYLFPLKTHYEVYDVRVLGAIGVVECYHYINISMMQNYFVKNNVWIRPFRKLIYLVPAYIIDNASLKKLINVISNALNYENFFMK</sequence>
<keyword id="KW-0032">Aminotransferase</keyword>
<keyword id="KW-0093">Biotin biosynthesis</keyword>
<keyword id="KW-0963">Cytoplasm</keyword>
<keyword id="KW-0663">Pyridoxal phosphate</keyword>
<keyword id="KW-1185">Reference proteome</keyword>
<keyword id="KW-0949">S-adenosyl-L-methionine</keyword>
<keyword id="KW-0808">Transferase</keyword>
<name>BIOA_BUCBP</name>
<reference key="1">
    <citation type="journal article" date="2003" name="Proc. Natl. Acad. Sci. U.S.A.">
        <title>Reductive genome evolution in Buchnera aphidicola.</title>
        <authorList>
            <person name="van Ham R.C.H.J."/>
            <person name="Kamerbeek J."/>
            <person name="Palacios C."/>
            <person name="Rausell C."/>
            <person name="Abascal F."/>
            <person name="Bastolla U."/>
            <person name="Fernandez J.M."/>
            <person name="Jimenez L."/>
            <person name="Postigo M."/>
            <person name="Silva F.J."/>
            <person name="Tamames J."/>
            <person name="Viguera E."/>
            <person name="Latorre A."/>
            <person name="Valencia A."/>
            <person name="Moran F."/>
            <person name="Moya A."/>
        </authorList>
    </citation>
    <scope>NUCLEOTIDE SEQUENCE [LARGE SCALE GENOMIC DNA]</scope>
    <source>
        <strain>Bp</strain>
    </source>
</reference>
<gene>
    <name evidence="1" type="primary">bioA</name>
    <name type="ordered locus">bbp_273</name>
</gene>
<evidence type="ECO:0000255" key="1">
    <source>
        <dbReference type="HAMAP-Rule" id="MF_00834"/>
    </source>
</evidence>
<comment type="function">
    <text evidence="1">Catalyzes the transfer of the alpha-amino group from S-adenosyl-L-methionine (SAM) to 7-keto-8-aminopelargonic acid (KAPA) to form 7,8-diaminopelargonic acid (DAPA). It is the only aminotransferase known to utilize SAM as an amino donor.</text>
</comment>
<comment type="catalytic activity">
    <reaction evidence="1">
        <text>(8S)-8-amino-7-oxononanoate + S-adenosyl-L-methionine = S-adenosyl-4-methylsulfanyl-2-oxobutanoate + (7R,8S)-7,8-diammoniononanoate</text>
        <dbReference type="Rhea" id="RHEA:16861"/>
        <dbReference type="ChEBI" id="CHEBI:16490"/>
        <dbReference type="ChEBI" id="CHEBI:59789"/>
        <dbReference type="ChEBI" id="CHEBI:149468"/>
        <dbReference type="ChEBI" id="CHEBI:149469"/>
        <dbReference type="EC" id="2.6.1.62"/>
    </reaction>
</comment>
<comment type="cofactor">
    <cofactor evidence="1">
        <name>pyridoxal 5'-phosphate</name>
        <dbReference type="ChEBI" id="CHEBI:597326"/>
    </cofactor>
</comment>
<comment type="pathway">
    <text evidence="1">Cofactor biosynthesis; biotin biosynthesis; 7,8-diaminononanoate from 8-amino-7-oxononanoate (SAM route): step 1/1.</text>
</comment>
<comment type="subunit">
    <text evidence="1">Homodimer.</text>
</comment>
<comment type="subcellular location">
    <subcellularLocation>
        <location evidence="1">Cytoplasm</location>
    </subcellularLocation>
</comment>
<comment type="similarity">
    <text evidence="1">Belongs to the class-III pyridoxal-phosphate-dependent aminotransferase family. BioA subfamily.</text>
</comment>
<dbReference type="EC" id="2.6.1.62" evidence="1"/>
<dbReference type="EMBL" id="AE016826">
    <property type="protein sequence ID" value="AAO26998.1"/>
    <property type="molecule type" value="Genomic_DNA"/>
</dbReference>
<dbReference type="RefSeq" id="WP_011091399.1">
    <property type="nucleotide sequence ID" value="NC_004545.1"/>
</dbReference>
<dbReference type="SMR" id="Q89AK4"/>
<dbReference type="STRING" id="224915.bbp_273"/>
<dbReference type="KEGG" id="bab:bbp_273"/>
<dbReference type="eggNOG" id="COG0161">
    <property type="taxonomic scope" value="Bacteria"/>
</dbReference>
<dbReference type="HOGENOM" id="CLU_016922_4_3_6"/>
<dbReference type="OrthoDB" id="9801052at2"/>
<dbReference type="UniPathway" id="UPA00078">
    <property type="reaction ID" value="UER00160"/>
</dbReference>
<dbReference type="Proteomes" id="UP000000601">
    <property type="component" value="Chromosome"/>
</dbReference>
<dbReference type="GO" id="GO:0005737">
    <property type="term" value="C:cytoplasm"/>
    <property type="evidence" value="ECO:0007669"/>
    <property type="project" value="UniProtKB-SubCell"/>
</dbReference>
<dbReference type="GO" id="GO:0004015">
    <property type="term" value="F:adenosylmethionine-8-amino-7-oxononanoate transaminase activity"/>
    <property type="evidence" value="ECO:0007669"/>
    <property type="project" value="UniProtKB-UniRule"/>
</dbReference>
<dbReference type="GO" id="GO:0030170">
    <property type="term" value="F:pyridoxal phosphate binding"/>
    <property type="evidence" value="ECO:0007669"/>
    <property type="project" value="UniProtKB-UniRule"/>
</dbReference>
<dbReference type="GO" id="GO:0009102">
    <property type="term" value="P:biotin biosynthetic process"/>
    <property type="evidence" value="ECO:0007669"/>
    <property type="project" value="UniProtKB-UniRule"/>
</dbReference>
<dbReference type="CDD" id="cd00610">
    <property type="entry name" value="OAT_like"/>
    <property type="match status" value="1"/>
</dbReference>
<dbReference type="FunFam" id="3.40.640.10:FF:000041">
    <property type="entry name" value="Adenosylmethionine-8-amino-7-oxononanoate aminotransferase"/>
    <property type="match status" value="1"/>
</dbReference>
<dbReference type="Gene3D" id="3.90.1150.10">
    <property type="entry name" value="Aspartate Aminotransferase, domain 1"/>
    <property type="match status" value="1"/>
</dbReference>
<dbReference type="Gene3D" id="3.40.640.10">
    <property type="entry name" value="Type I PLP-dependent aspartate aminotransferase-like (Major domain)"/>
    <property type="match status" value="1"/>
</dbReference>
<dbReference type="HAMAP" id="MF_00834">
    <property type="entry name" value="BioA"/>
    <property type="match status" value="1"/>
</dbReference>
<dbReference type="InterPro" id="IPR005814">
    <property type="entry name" value="Aminotrans_3"/>
</dbReference>
<dbReference type="InterPro" id="IPR049704">
    <property type="entry name" value="Aminotrans_3_PPA_site"/>
</dbReference>
<dbReference type="InterPro" id="IPR005815">
    <property type="entry name" value="BioA"/>
</dbReference>
<dbReference type="InterPro" id="IPR015424">
    <property type="entry name" value="PyrdxlP-dep_Trfase"/>
</dbReference>
<dbReference type="InterPro" id="IPR015421">
    <property type="entry name" value="PyrdxlP-dep_Trfase_major"/>
</dbReference>
<dbReference type="InterPro" id="IPR015422">
    <property type="entry name" value="PyrdxlP-dep_Trfase_small"/>
</dbReference>
<dbReference type="NCBIfam" id="TIGR00508">
    <property type="entry name" value="bioA"/>
    <property type="match status" value="1"/>
</dbReference>
<dbReference type="NCBIfam" id="NF004624">
    <property type="entry name" value="PRK05964.1"/>
    <property type="match status" value="1"/>
</dbReference>
<dbReference type="NCBIfam" id="NF005940">
    <property type="entry name" value="PRK07986.1"/>
    <property type="match status" value="1"/>
</dbReference>
<dbReference type="PANTHER" id="PTHR42684">
    <property type="entry name" value="ADENOSYLMETHIONINE-8-AMINO-7-OXONONANOATE AMINOTRANSFERASE"/>
    <property type="match status" value="1"/>
</dbReference>
<dbReference type="PANTHER" id="PTHR42684:SF17">
    <property type="entry name" value="ADENOSYLMETHIONINE-8-AMINO-7-OXONONANOATE AMINOTRANSFERASE"/>
    <property type="match status" value="1"/>
</dbReference>
<dbReference type="Pfam" id="PF00202">
    <property type="entry name" value="Aminotran_3"/>
    <property type="match status" value="1"/>
</dbReference>
<dbReference type="SUPFAM" id="SSF53383">
    <property type="entry name" value="PLP-dependent transferases"/>
    <property type="match status" value="1"/>
</dbReference>
<dbReference type="PROSITE" id="PS00600">
    <property type="entry name" value="AA_TRANSFER_CLASS_3"/>
    <property type="match status" value="1"/>
</dbReference>
<accession>Q89AK4</accession>
<proteinExistence type="inferred from homology"/>
<feature type="chain" id="PRO_0000120364" description="Adenosylmethionine-8-amino-7-oxononanoate aminotransferase">
    <location>
        <begin position="1"/>
        <end position="429"/>
    </location>
</feature>
<feature type="binding site" evidence="1">
    <location>
        <position position="52"/>
    </location>
    <ligand>
        <name>substrate</name>
    </ligand>
</feature>
<feature type="binding site" evidence="1">
    <location>
        <begin position="112"/>
        <end position="113"/>
    </location>
    <ligand>
        <name>pyridoxal 5'-phosphate</name>
        <dbReference type="ChEBI" id="CHEBI:597326"/>
    </ligand>
</feature>
<feature type="binding site" evidence="1">
    <location>
        <position position="144"/>
    </location>
    <ligand>
        <name>substrate</name>
    </ligand>
</feature>
<feature type="binding site" evidence="1">
    <location>
        <position position="245"/>
    </location>
    <ligand>
        <name>pyridoxal 5'-phosphate</name>
        <dbReference type="ChEBI" id="CHEBI:597326"/>
    </ligand>
</feature>
<feature type="binding site" evidence="1">
    <location>
        <position position="274"/>
    </location>
    <ligand>
        <name>substrate</name>
    </ligand>
</feature>
<feature type="binding site" evidence="1">
    <location>
        <position position="307"/>
    </location>
    <ligand>
        <name>substrate</name>
    </ligand>
</feature>
<feature type="binding site" evidence="1">
    <location>
        <begin position="308"/>
        <end position="309"/>
    </location>
    <ligand>
        <name>pyridoxal 5'-phosphate</name>
        <dbReference type="ChEBI" id="CHEBI:597326"/>
    </ligand>
</feature>
<feature type="binding site" evidence="1">
    <location>
        <position position="391"/>
    </location>
    <ligand>
        <name>substrate</name>
    </ligand>
</feature>
<feature type="site" description="Participates in the substrate recognition with KAPA and in a stacking interaction with the adenine ring of SAM" evidence="1">
    <location>
        <position position="17"/>
    </location>
</feature>
<feature type="modified residue" description="N6-(pyridoxal phosphate)lysine" evidence="1">
    <location>
        <position position="274"/>
    </location>
</feature>
<organism>
    <name type="scientific">Buchnera aphidicola subsp. Baizongia pistaciae (strain Bp)</name>
    <dbReference type="NCBI Taxonomy" id="224915"/>
    <lineage>
        <taxon>Bacteria</taxon>
        <taxon>Pseudomonadati</taxon>
        <taxon>Pseudomonadota</taxon>
        <taxon>Gammaproteobacteria</taxon>
        <taxon>Enterobacterales</taxon>
        <taxon>Erwiniaceae</taxon>
        <taxon>Buchnera</taxon>
    </lineage>
</organism>